<evidence type="ECO:0000250" key="1">
    <source>
        <dbReference type="UniProtKB" id="Q9NWT1"/>
    </source>
</evidence>
<evidence type="ECO:0000256" key="2">
    <source>
        <dbReference type="SAM" id="MobiDB-lite"/>
    </source>
</evidence>
<evidence type="ECO:0000305" key="3"/>
<sequence length="382" mass="42116">MELVAGSYEQVLFGFTVQRGPAKSGHQETWTPVADFTHHSHTASLSVLASNSRYVVSGSKDETIHIYDMKRKVEHGALVHHAGTVTCLKFHGNQHLISGAEDGHICIWDVKRWKCLKTFKAHRGHVTFLSIHPSGKLALSVGTDKTLRTWNLIEGRSAFIKNIKENAHIVEWSPSGGKYIVVVQNKVDVYRLGTASVSGTITNGKRISSVTFLSDSVLAVAGDEEVVRIFDCDSLECLCEFRAHENRVKDMVSFEVPDHHVLVTASNDGFIKMWTLPQDKKVPPSLLCEAKTGARLTCLTVWLDRAANGMASLPPAAEPCPDQPKTIEKESGDTVQEETSEPNSEKSDVSGDSKQPTKGNSPVTAKKRKMATMSEKKRKKKM</sequence>
<protein>
    <recommendedName>
        <fullName>p21-activated protein kinase-interacting protein 1</fullName>
    </recommendedName>
    <alternativeName>
        <fullName>PAK1-interacting protein 1</fullName>
    </alternativeName>
    <alternativeName>
        <fullName>Putative PAK inhibitor Skb15</fullName>
    </alternativeName>
</protein>
<keyword id="KW-0539">Nucleus</keyword>
<keyword id="KW-1185">Reference proteome</keyword>
<keyword id="KW-0677">Repeat</keyword>
<keyword id="KW-0690">Ribosome biogenesis</keyword>
<keyword id="KW-0734">Signal transduction inhibitor</keyword>
<keyword id="KW-0853">WD repeat</keyword>
<name>PK1IP_MOUSE</name>
<proteinExistence type="evidence at protein level"/>
<accession>Q9DCE5</accession>
<accession>Q3UBK7</accession>
<accession>Q80UT4</accession>
<accession>Q8C5N6</accession>
<accession>Q923K2</accession>
<accession>Q9D3E9</accession>
<gene>
    <name type="primary">Pak1ip1</name>
</gene>
<comment type="function">
    <text evidence="1">Negatively regulates the PAK1 kinase. PAK1 is a member of the PAK kinase family, which has been shown to play a positive role in the regulation of signaling pathways involving MAPK8 and RELA. PAK1 exists as an inactive homodimer, which is activated by binding of small GTPases such as CDC42 to an N-terminal regulatory domain. PAK1IP1 also binds to the N-terminus of PAK1, and inhibits the specific activation of PAK1 by CDC42. May be involved in ribosomal large subunit assembly.</text>
</comment>
<comment type="subunit">
    <text evidence="1">Interacts with PAK1.</text>
</comment>
<comment type="subcellular location">
    <subcellularLocation>
        <location evidence="1">Nucleus</location>
        <location evidence="1">Nucleolus</location>
    </subcellularLocation>
</comment>
<feature type="chain" id="PRO_0000051126" description="p21-activated protein kinase-interacting protein 1">
    <location>
        <begin position="1"/>
        <end position="382"/>
    </location>
</feature>
<feature type="repeat" description="WD 1">
    <location>
        <begin position="37"/>
        <end position="77"/>
    </location>
</feature>
<feature type="repeat" description="WD 2">
    <location>
        <begin position="80"/>
        <end position="120"/>
    </location>
</feature>
<feature type="repeat" description="WD 3">
    <location>
        <begin position="122"/>
        <end position="160"/>
    </location>
</feature>
<feature type="repeat" description="WD 4">
    <location>
        <begin position="202"/>
        <end position="240"/>
    </location>
</feature>
<feature type="repeat" description="WD 5">
    <location>
        <begin position="243"/>
        <end position="284"/>
    </location>
</feature>
<feature type="region of interest" description="Disordered" evidence="2">
    <location>
        <begin position="313"/>
        <end position="382"/>
    </location>
</feature>
<feature type="compositionally biased region" description="Polar residues" evidence="2">
    <location>
        <begin position="352"/>
        <end position="363"/>
    </location>
</feature>
<feature type="compositionally biased region" description="Basic residues" evidence="2">
    <location>
        <begin position="365"/>
        <end position="382"/>
    </location>
</feature>
<feature type="sequence conflict" description="In Ref. 1; AAK51599." evidence="3" ref="1">
    <original>G</original>
    <variation>R</variation>
    <location>
        <position position="176"/>
    </location>
</feature>
<feature type="sequence conflict" description="In Ref. 2 and 3; BAB22407." evidence="3" ref="2 3">
    <original>M</original>
    <variation>MSLTWQIPDFSSLSECPFDGILHVPVRRKYLLP</variation>
    <location>
        <position position="382"/>
    </location>
</feature>
<organism>
    <name type="scientific">Mus musculus</name>
    <name type="common">Mouse</name>
    <dbReference type="NCBI Taxonomy" id="10090"/>
    <lineage>
        <taxon>Eukaryota</taxon>
        <taxon>Metazoa</taxon>
        <taxon>Chordata</taxon>
        <taxon>Craniata</taxon>
        <taxon>Vertebrata</taxon>
        <taxon>Euteleostomi</taxon>
        <taxon>Mammalia</taxon>
        <taxon>Eutheria</taxon>
        <taxon>Euarchontoglires</taxon>
        <taxon>Glires</taxon>
        <taxon>Rodentia</taxon>
        <taxon>Myomorpha</taxon>
        <taxon>Muroidea</taxon>
        <taxon>Muridae</taxon>
        <taxon>Murinae</taxon>
        <taxon>Mus</taxon>
        <taxon>Mus</taxon>
    </lineage>
</organism>
<reference key="1">
    <citation type="journal article" date="2001" name="Mol. Cell">
        <title>Genetic and molecular characterization of Skb15, a highly conserved inhibitor of the fission yeast PAK, Shk1.</title>
        <authorList>
            <person name="Kim H.W."/>
            <person name="Yang P."/>
            <person name="Qyang Y."/>
            <person name="Lai H."/>
            <person name="Du H."/>
            <person name="Henkel J.S."/>
            <person name="Kumar K."/>
            <person name="Bao S."/>
            <person name="Liu M."/>
            <person name="Marcus S."/>
        </authorList>
    </citation>
    <scope>NUCLEOTIDE SEQUENCE [MRNA]</scope>
</reference>
<reference key="2">
    <citation type="submission" date="2001-05" db="EMBL/GenBank/DDBJ databases">
        <title>Mouse homolog of human p21-activated protein kinase-interacting protein 1 (hPIP1).</title>
        <authorList>
            <person name="Liu M."/>
            <person name="Xia C."/>
        </authorList>
    </citation>
    <scope>NUCLEOTIDE SEQUENCE [MRNA]</scope>
</reference>
<reference key="3">
    <citation type="journal article" date="2005" name="Science">
        <title>The transcriptional landscape of the mammalian genome.</title>
        <authorList>
            <person name="Carninci P."/>
            <person name="Kasukawa T."/>
            <person name="Katayama S."/>
            <person name="Gough J."/>
            <person name="Frith M.C."/>
            <person name="Maeda N."/>
            <person name="Oyama R."/>
            <person name="Ravasi T."/>
            <person name="Lenhard B."/>
            <person name="Wells C."/>
            <person name="Kodzius R."/>
            <person name="Shimokawa K."/>
            <person name="Bajic V.B."/>
            <person name="Brenner S.E."/>
            <person name="Batalov S."/>
            <person name="Forrest A.R."/>
            <person name="Zavolan M."/>
            <person name="Davis M.J."/>
            <person name="Wilming L.G."/>
            <person name="Aidinis V."/>
            <person name="Allen J.E."/>
            <person name="Ambesi-Impiombato A."/>
            <person name="Apweiler R."/>
            <person name="Aturaliya R.N."/>
            <person name="Bailey T.L."/>
            <person name="Bansal M."/>
            <person name="Baxter L."/>
            <person name="Beisel K.W."/>
            <person name="Bersano T."/>
            <person name="Bono H."/>
            <person name="Chalk A.M."/>
            <person name="Chiu K.P."/>
            <person name="Choudhary V."/>
            <person name="Christoffels A."/>
            <person name="Clutterbuck D.R."/>
            <person name="Crowe M.L."/>
            <person name="Dalla E."/>
            <person name="Dalrymple B.P."/>
            <person name="de Bono B."/>
            <person name="Della Gatta G."/>
            <person name="di Bernardo D."/>
            <person name="Down T."/>
            <person name="Engstrom P."/>
            <person name="Fagiolini M."/>
            <person name="Faulkner G."/>
            <person name="Fletcher C.F."/>
            <person name="Fukushima T."/>
            <person name="Furuno M."/>
            <person name="Futaki S."/>
            <person name="Gariboldi M."/>
            <person name="Georgii-Hemming P."/>
            <person name="Gingeras T.R."/>
            <person name="Gojobori T."/>
            <person name="Green R.E."/>
            <person name="Gustincich S."/>
            <person name="Harbers M."/>
            <person name="Hayashi Y."/>
            <person name="Hensch T.K."/>
            <person name="Hirokawa N."/>
            <person name="Hill D."/>
            <person name="Huminiecki L."/>
            <person name="Iacono M."/>
            <person name="Ikeo K."/>
            <person name="Iwama A."/>
            <person name="Ishikawa T."/>
            <person name="Jakt M."/>
            <person name="Kanapin A."/>
            <person name="Katoh M."/>
            <person name="Kawasawa Y."/>
            <person name="Kelso J."/>
            <person name="Kitamura H."/>
            <person name="Kitano H."/>
            <person name="Kollias G."/>
            <person name="Krishnan S.P."/>
            <person name="Kruger A."/>
            <person name="Kummerfeld S.K."/>
            <person name="Kurochkin I.V."/>
            <person name="Lareau L.F."/>
            <person name="Lazarevic D."/>
            <person name="Lipovich L."/>
            <person name="Liu J."/>
            <person name="Liuni S."/>
            <person name="McWilliam S."/>
            <person name="Madan Babu M."/>
            <person name="Madera M."/>
            <person name="Marchionni L."/>
            <person name="Matsuda H."/>
            <person name="Matsuzawa S."/>
            <person name="Miki H."/>
            <person name="Mignone F."/>
            <person name="Miyake S."/>
            <person name="Morris K."/>
            <person name="Mottagui-Tabar S."/>
            <person name="Mulder N."/>
            <person name="Nakano N."/>
            <person name="Nakauchi H."/>
            <person name="Ng P."/>
            <person name="Nilsson R."/>
            <person name="Nishiguchi S."/>
            <person name="Nishikawa S."/>
            <person name="Nori F."/>
            <person name="Ohara O."/>
            <person name="Okazaki Y."/>
            <person name="Orlando V."/>
            <person name="Pang K.C."/>
            <person name="Pavan W.J."/>
            <person name="Pavesi G."/>
            <person name="Pesole G."/>
            <person name="Petrovsky N."/>
            <person name="Piazza S."/>
            <person name="Reed J."/>
            <person name="Reid J.F."/>
            <person name="Ring B.Z."/>
            <person name="Ringwald M."/>
            <person name="Rost B."/>
            <person name="Ruan Y."/>
            <person name="Salzberg S.L."/>
            <person name="Sandelin A."/>
            <person name="Schneider C."/>
            <person name="Schoenbach C."/>
            <person name="Sekiguchi K."/>
            <person name="Semple C.A."/>
            <person name="Seno S."/>
            <person name="Sessa L."/>
            <person name="Sheng Y."/>
            <person name="Shibata Y."/>
            <person name="Shimada H."/>
            <person name="Shimada K."/>
            <person name="Silva D."/>
            <person name="Sinclair B."/>
            <person name="Sperling S."/>
            <person name="Stupka E."/>
            <person name="Sugiura K."/>
            <person name="Sultana R."/>
            <person name="Takenaka Y."/>
            <person name="Taki K."/>
            <person name="Tammoja K."/>
            <person name="Tan S.L."/>
            <person name="Tang S."/>
            <person name="Taylor M.S."/>
            <person name="Tegner J."/>
            <person name="Teichmann S.A."/>
            <person name="Ueda H.R."/>
            <person name="van Nimwegen E."/>
            <person name="Verardo R."/>
            <person name="Wei C.L."/>
            <person name="Yagi K."/>
            <person name="Yamanishi H."/>
            <person name="Zabarovsky E."/>
            <person name="Zhu S."/>
            <person name="Zimmer A."/>
            <person name="Hide W."/>
            <person name="Bult C."/>
            <person name="Grimmond S.M."/>
            <person name="Teasdale R.D."/>
            <person name="Liu E.T."/>
            <person name="Brusic V."/>
            <person name="Quackenbush J."/>
            <person name="Wahlestedt C."/>
            <person name="Mattick J.S."/>
            <person name="Hume D.A."/>
            <person name="Kai C."/>
            <person name="Sasaki D."/>
            <person name="Tomaru Y."/>
            <person name="Fukuda S."/>
            <person name="Kanamori-Katayama M."/>
            <person name="Suzuki M."/>
            <person name="Aoki J."/>
            <person name="Arakawa T."/>
            <person name="Iida J."/>
            <person name="Imamura K."/>
            <person name="Itoh M."/>
            <person name="Kato T."/>
            <person name="Kawaji H."/>
            <person name="Kawagashira N."/>
            <person name="Kawashima T."/>
            <person name="Kojima M."/>
            <person name="Kondo S."/>
            <person name="Konno H."/>
            <person name="Nakano K."/>
            <person name="Ninomiya N."/>
            <person name="Nishio T."/>
            <person name="Okada M."/>
            <person name="Plessy C."/>
            <person name="Shibata K."/>
            <person name="Shiraki T."/>
            <person name="Suzuki S."/>
            <person name="Tagami M."/>
            <person name="Waki K."/>
            <person name="Watahiki A."/>
            <person name="Okamura-Oho Y."/>
            <person name="Suzuki H."/>
            <person name="Kawai J."/>
            <person name="Hayashizaki Y."/>
        </authorList>
    </citation>
    <scope>NUCLEOTIDE SEQUENCE [LARGE SCALE MRNA]</scope>
    <source>
        <strain>C57BL/6J</strain>
        <tissue>Bone marrow</tissue>
        <tissue>Kidney</tissue>
        <tissue>Testis</tissue>
    </source>
</reference>
<reference key="4">
    <citation type="journal article" date="2004" name="Genome Res.">
        <title>The status, quality, and expansion of the NIH full-length cDNA project: the Mammalian Gene Collection (MGC).</title>
        <authorList>
            <consortium name="The MGC Project Team"/>
        </authorList>
    </citation>
    <scope>NUCLEOTIDE SEQUENCE [LARGE SCALE MRNA] OF 254-382</scope>
    <source>
        <strain>C57BL/6J</strain>
        <tissue>Thymus</tissue>
    </source>
</reference>
<reference key="5">
    <citation type="journal article" date="2010" name="Cell">
        <title>A tissue-specific atlas of mouse protein phosphorylation and expression.</title>
        <authorList>
            <person name="Huttlin E.L."/>
            <person name="Jedrychowski M.P."/>
            <person name="Elias J.E."/>
            <person name="Goswami T."/>
            <person name="Rad R."/>
            <person name="Beausoleil S.A."/>
            <person name="Villen J."/>
            <person name="Haas W."/>
            <person name="Sowa M.E."/>
            <person name="Gygi S.P."/>
        </authorList>
    </citation>
    <scope>IDENTIFICATION BY MASS SPECTROMETRY [LARGE SCALE ANALYSIS]</scope>
    <source>
        <tissue>Spleen</tissue>
        <tissue>Testis</tissue>
    </source>
</reference>
<dbReference type="EMBL" id="AY030406">
    <property type="protein sequence ID" value="AAK51599.1"/>
    <property type="molecule type" value="mRNA"/>
</dbReference>
<dbReference type="EMBL" id="AF386076">
    <property type="protein sequence ID" value="AAL40652.1"/>
    <property type="molecule type" value="mRNA"/>
</dbReference>
<dbReference type="EMBL" id="AK002852">
    <property type="protein sequence ID" value="BAB22407.1"/>
    <property type="molecule type" value="mRNA"/>
</dbReference>
<dbReference type="EMBL" id="AK077941">
    <property type="protein sequence ID" value="BAC37076.1"/>
    <property type="molecule type" value="mRNA"/>
</dbReference>
<dbReference type="EMBL" id="AK150747">
    <property type="protein sequence ID" value="BAE29818.1"/>
    <property type="molecule type" value="mRNA"/>
</dbReference>
<dbReference type="EMBL" id="AK150919">
    <property type="protein sequence ID" value="BAE29957.1"/>
    <property type="molecule type" value="mRNA"/>
</dbReference>
<dbReference type="EMBL" id="BC051498">
    <property type="protein sequence ID" value="AAH51498.1"/>
    <property type="molecule type" value="mRNA"/>
</dbReference>
<dbReference type="CCDS" id="CCDS36638.1"/>
<dbReference type="RefSeq" id="NP_080826.2">
    <property type="nucleotide sequence ID" value="NM_026550.3"/>
</dbReference>
<dbReference type="SMR" id="Q9DCE5"/>
<dbReference type="BioGRID" id="212647">
    <property type="interactions" value="7"/>
</dbReference>
<dbReference type="FunCoup" id="Q9DCE5">
    <property type="interactions" value="2151"/>
</dbReference>
<dbReference type="STRING" id="10090.ENSMUSP00000040846"/>
<dbReference type="iPTMnet" id="Q9DCE5"/>
<dbReference type="PhosphoSitePlus" id="Q9DCE5"/>
<dbReference type="SwissPalm" id="Q9DCE5"/>
<dbReference type="jPOST" id="Q9DCE5"/>
<dbReference type="PaxDb" id="10090-ENSMUSP00000040846"/>
<dbReference type="ProteomicsDB" id="289588"/>
<dbReference type="Pumba" id="Q9DCE5"/>
<dbReference type="Antibodypedia" id="24813">
    <property type="antibodies" value="92 antibodies from 23 providers"/>
</dbReference>
<dbReference type="DNASU" id="68083"/>
<dbReference type="Ensembl" id="ENSMUST00000046951.10">
    <property type="protein sequence ID" value="ENSMUSP00000040846.10"/>
    <property type="gene ID" value="ENSMUSG00000038683.17"/>
</dbReference>
<dbReference type="GeneID" id="68083"/>
<dbReference type="KEGG" id="mmu:68083"/>
<dbReference type="UCSC" id="uc007qer.2">
    <property type="organism name" value="mouse"/>
</dbReference>
<dbReference type="AGR" id="MGI:1915333"/>
<dbReference type="CTD" id="55003"/>
<dbReference type="MGI" id="MGI:1915333">
    <property type="gene designation" value="Pak1ip1"/>
</dbReference>
<dbReference type="VEuPathDB" id="HostDB:ENSMUSG00000038683"/>
<dbReference type="eggNOG" id="KOG0294">
    <property type="taxonomic scope" value="Eukaryota"/>
</dbReference>
<dbReference type="GeneTree" id="ENSGT00390000001263"/>
<dbReference type="HOGENOM" id="CLU_031466_2_0_1"/>
<dbReference type="InParanoid" id="Q9DCE5"/>
<dbReference type="OMA" id="IIIWRTK"/>
<dbReference type="OrthoDB" id="308449at2759"/>
<dbReference type="PhylomeDB" id="Q9DCE5"/>
<dbReference type="TreeFam" id="TF326684"/>
<dbReference type="BioGRID-ORCS" id="68083">
    <property type="hits" value="30 hits in 85 CRISPR screens"/>
</dbReference>
<dbReference type="ChiTaRS" id="Pak1ip1">
    <property type="organism name" value="mouse"/>
</dbReference>
<dbReference type="PRO" id="PR:Q9DCE5"/>
<dbReference type="Proteomes" id="UP000000589">
    <property type="component" value="Chromosome 13"/>
</dbReference>
<dbReference type="RNAct" id="Q9DCE5">
    <property type="molecule type" value="protein"/>
</dbReference>
<dbReference type="Bgee" id="ENSMUSG00000038683">
    <property type="expression patterns" value="Expressed in placenta labyrinth and 263 other cell types or tissues"/>
</dbReference>
<dbReference type="GO" id="GO:0005730">
    <property type="term" value="C:nucleolus"/>
    <property type="evidence" value="ECO:0000314"/>
    <property type="project" value="MGI"/>
</dbReference>
<dbReference type="GO" id="GO:0008283">
    <property type="term" value="P:cell population proliferation"/>
    <property type="evidence" value="ECO:0000353"/>
    <property type="project" value="MGI"/>
</dbReference>
<dbReference type="GO" id="GO:0009968">
    <property type="term" value="P:negative regulation of signal transduction"/>
    <property type="evidence" value="ECO:0007669"/>
    <property type="project" value="UniProtKB-KW"/>
</dbReference>
<dbReference type="GO" id="GO:1901796">
    <property type="term" value="P:regulation of signal transduction by p53 class mediator"/>
    <property type="evidence" value="ECO:0000250"/>
    <property type="project" value="UniProtKB"/>
</dbReference>
<dbReference type="GO" id="GO:0042273">
    <property type="term" value="P:ribosomal large subunit biogenesis"/>
    <property type="evidence" value="ECO:0000250"/>
    <property type="project" value="UniProtKB"/>
</dbReference>
<dbReference type="GO" id="GO:0060021">
    <property type="term" value="P:roof of mouth development"/>
    <property type="evidence" value="ECO:0000315"/>
    <property type="project" value="MGI"/>
</dbReference>
<dbReference type="FunFam" id="2.130.10.10:FF:000424">
    <property type="entry name" value="p21-activated protein kinase-interacting protein 1-like"/>
    <property type="match status" value="1"/>
</dbReference>
<dbReference type="FunFam" id="2.130.10.10:FF:003600">
    <property type="entry name" value="p21-activated protein kinase-interacting protein 1-like"/>
    <property type="match status" value="1"/>
</dbReference>
<dbReference type="Gene3D" id="2.130.10.10">
    <property type="entry name" value="YVTN repeat-like/Quinoprotein amine dehydrogenase"/>
    <property type="match status" value="2"/>
</dbReference>
<dbReference type="InterPro" id="IPR020472">
    <property type="entry name" value="G-protein_beta_WD-40_rep"/>
</dbReference>
<dbReference type="InterPro" id="IPR051959">
    <property type="entry name" value="PAK1-Kinase_Regulator"/>
</dbReference>
<dbReference type="InterPro" id="IPR015943">
    <property type="entry name" value="WD40/YVTN_repeat-like_dom_sf"/>
</dbReference>
<dbReference type="InterPro" id="IPR019775">
    <property type="entry name" value="WD40_repeat_CS"/>
</dbReference>
<dbReference type="InterPro" id="IPR036322">
    <property type="entry name" value="WD40_repeat_dom_sf"/>
</dbReference>
<dbReference type="InterPro" id="IPR001680">
    <property type="entry name" value="WD40_rpt"/>
</dbReference>
<dbReference type="PANTHER" id="PTHR44675:SF1">
    <property type="entry name" value="P21-ACTIVATED PROTEIN KINASE-INTERACTING PROTEIN 1"/>
    <property type="match status" value="1"/>
</dbReference>
<dbReference type="PANTHER" id="PTHR44675">
    <property type="entry name" value="PAK1 INTERACTING PROTEIN 1"/>
    <property type="match status" value="1"/>
</dbReference>
<dbReference type="Pfam" id="PF23761">
    <property type="entry name" value="Beta-prop_DCAF4"/>
    <property type="match status" value="1"/>
</dbReference>
<dbReference type="Pfam" id="PF00400">
    <property type="entry name" value="WD40"/>
    <property type="match status" value="1"/>
</dbReference>
<dbReference type="PRINTS" id="PR00320">
    <property type="entry name" value="GPROTEINBRPT"/>
</dbReference>
<dbReference type="SMART" id="SM00320">
    <property type="entry name" value="WD40"/>
    <property type="match status" value="5"/>
</dbReference>
<dbReference type="SUPFAM" id="SSF50978">
    <property type="entry name" value="WD40 repeat-like"/>
    <property type="match status" value="1"/>
</dbReference>
<dbReference type="PROSITE" id="PS00678">
    <property type="entry name" value="WD_REPEATS_1"/>
    <property type="match status" value="2"/>
</dbReference>
<dbReference type="PROSITE" id="PS50082">
    <property type="entry name" value="WD_REPEATS_2"/>
    <property type="match status" value="3"/>
</dbReference>
<dbReference type="PROSITE" id="PS50294">
    <property type="entry name" value="WD_REPEATS_REGION"/>
    <property type="match status" value="2"/>
</dbReference>